<gene>
    <name evidence="1" type="primary">mtnN</name>
    <name type="ordered locus">GK2542</name>
</gene>
<reference key="1">
    <citation type="journal article" date="2004" name="Nucleic Acids Res.">
        <title>Thermoadaptation trait revealed by the genome sequence of thermophilic Geobacillus kaustophilus.</title>
        <authorList>
            <person name="Takami H."/>
            <person name="Takaki Y."/>
            <person name="Chee G.-J."/>
            <person name="Nishi S."/>
            <person name="Shimamura S."/>
            <person name="Suzuki H."/>
            <person name="Matsui S."/>
            <person name="Uchiyama I."/>
        </authorList>
    </citation>
    <scope>NUCLEOTIDE SEQUENCE [LARGE SCALE GENOMIC DNA]</scope>
    <source>
        <strain>HTA426</strain>
    </source>
</reference>
<feature type="chain" id="PRO_0000359302" description="5'-methylthioadenosine/S-adenosylhomocysteine nucleosidase">
    <location>
        <begin position="1"/>
        <end position="235"/>
    </location>
</feature>
<feature type="active site" description="Proton acceptor" evidence="1">
    <location>
        <position position="12"/>
    </location>
</feature>
<feature type="active site" description="Proton donor" evidence="1">
    <location>
        <position position="198"/>
    </location>
</feature>
<feature type="binding site" evidence="1">
    <location>
        <position position="78"/>
    </location>
    <ligand>
        <name>substrate</name>
    </ligand>
</feature>
<feature type="binding site" evidence="1">
    <location>
        <position position="153"/>
    </location>
    <ligand>
        <name>substrate</name>
    </ligand>
</feature>
<feature type="binding site" evidence="1">
    <location>
        <begin position="174"/>
        <end position="175"/>
    </location>
    <ligand>
        <name>substrate</name>
    </ligand>
</feature>
<comment type="function">
    <text evidence="1">Catalyzes the irreversible cleavage of the glycosidic bond in both 5'-methylthioadenosine (MTA) and S-adenosylhomocysteine (SAH/AdoHcy) to adenine and the corresponding thioribose, 5'-methylthioribose and S-ribosylhomocysteine, respectively. Also cleaves 5'-deoxyadenosine, a toxic by-product of radical S-adenosylmethionine (SAM) enzymes, into 5-deoxyribose and adenine.</text>
</comment>
<comment type="catalytic activity">
    <reaction evidence="1">
        <text>S-adenosyl-L-homocysteine + H2O = S-(5-deoxy-D-ribos-5-yl)-L-homocysteine + adenine</text>
        <dbReference type="Rhea" id="RHEA:17805"/>
        <dbReference type="ChEBI" id="CHEBI:15377"/>
        <dbReference type="ChEBI" id="CHEBI:16708"/>
        <dbReference type="ChEBI" id="CHEBI:57856"/>
        <dbReference type="ChEBI" id="CHEBI:58195"/>
        <dbReference type="EC" id="3.2.2.9"/>
    </reaction>
</comment>
<comment type="catalytic activity">
    <reaction evidence="1">
        <text>S-methyl-5'-thioadenosine + H2O = 5-(methylsulfanyl)-D-ribose + adenine</text>
        <dbReference type="Rhea" id="RHEA:13617"/>
        <dbReference type="ChEBI" id="CHEBI:15377"/>
        <dbReference type="ChEBI" id="CHEBI:16708"/>
        <dbReference type="ChEBI" id="CHEBI:17509"/>
        <dbReference type="ChEBI" id="CHEBI:78440"/>
        <dbReference type="EC" id="3.2.2.9"/>
    </reaction>
</comment>
<comment type="catalytic activity">
    <reaction evidence="1">
        <text>5'-deoxyadenosine + H2O = 5-deoxy-D-ribose + adenine</text>
        <dbReference type="Rhea" id="RHEA:29859"/>
        <dbReference type="ChEBI" id="CHEBI:15377"/>
        <dbReference type="ChEBI" id="CHEBI:16708"/>
        <dbReference type="ChEBI" id="CHEBI:17319"/>
        <dbReference type="ChEBI" id="CHEBI:149540"/>
        <dbReference type="EC" id="3.2.2.9"/>
    </reaction>
    <physiologicalReaction direction="left-to-right" evidence="1">
        <dbReference type="Rhea" id="RHEA:29860"/>
    </physiologicalReaction>
</comment>
<comment type="pathway">
    <text evidence="1">Amino-acid biosynthesis; L-methionine biosynthesis via salvage pathway; S-methyl-5-thio-alpha-D-ribose 1-phosphate from S-methyl-5'-thioadenosine (hydrolase route): step 1/2.</text>
</comment>
<comment type="similarity">
    <text evidence="1">Belongs to the PNP/UDP phosphorylase family. MtnN subfamily.</text>
</comment>
<protein>
    <recommendedName>
        <fullName evidence="1">5'-methylthioadenosine/S-adenosylhomocysteine nucleosidase</fullName>
        <shortName evidence="1">MTA/SAH nucleosidase</shortName>
        <shortName evidence="1">MTAN</shortName>
        <ecNumber evidence="1">3.2.2.9</ecNumber>
    </recommendedName>
    <alternativeName>
        <fullName evidence="1">5'-deoxyadenosine nucleosidase</fullName>
        <shortName evidence="1">DOA nucleosidase</shortName>
        <shortName evidence="1">dAdo nucleosidase</shortName>
    </alternativeName>
    <alternativeName>
        <fullName evidence="1">5'-methylthioadenosine nucleosidase</fullName>
        <shortName evidence="1">MTA nucleosidase</shortName>
    </alternativeName>
    <alternativeName>
        <fullName evidence="1">S-adenosylhomocysteine nucleosidase</fullName>
        <shortName evidence="1">AdoHcy nucleosidase</shortName>
        <shortName evidence="1">SAH nucleosidase</shortName>
        <shortName evidence="1">SRH nucleosidase</shortName>
    </alternativeName>
</protein>
<organism>
    <name type="scientific">Geobacillus kaustophilus (strain HTA426)</name>
    <dbReference type="NCBI Taxonomy" id="235909"/>
    <lineage>
        <taxon>Bacteria</taxon>
        <taxon>Bacillati</taxon>
        <taxon>Bacillota</taxon>
        <taxon>Bacilli</taxon>
        <taxon>Bacillales</taxon>
        <taxon>Anoxybacillaceae</taxon>
        <taxon>Geobacillus</taxon>
        <taxon>Geobacillus thermoleovorans group</taxon>
    </lineage>
</organism>
<proteinExistence type="inferred from homology"/>
<name>MTNN_GEOKA</name>
<accession>Q5KWV9</accession>
<evidence type="ECO:0000255" key="1">
    <source>
        <dbReference type="HAMAP-Rule" id="MF_01684"/>
    </source>
</evidence>
<sequence>MKAAIIGAMEEEVAILRSRMEGCEETVIAGCEFSKGRLDGVEAVLLKSGIGKVNAAMGTTLLLDHFRPDFVINTGSAGGFLPSLRVGDLVISEEVVHHDVDVTAFGYAYGQVPGLPARYRADEALVEAAKQAAARLDGLQAVTGLIATGDSFMNDPKRVEFVRGQFPELCAVEMEAAAIAQVCVQFGTPFVIIRALSDIAGEESGVSFEQFLETAAKHSAELVLSMLSVMKQKRY</sequence>
<keyword id="KW-0028">Amino-acid biosynthesis</keyword>
<keyword id="KW-0378">Hydrolase</keyword>
<keyword id="KW-0486">Methionine biosynthesis</keyword>
<keyword id="KW-1185">Reference proteome</keyword>
<dbReference type="EC" id="3.2.2.9" evidence="1"/>
<dbReference type="EMBL" id="BA000043">
    <property type="protein sequence ID" value="BAD76827.1"/>
    <property type="molecule type" value="Genomic_DNA"/>
</dbReference>
<dbReference type="RefSeq" id="WP_011232020.1">
    <property type="nucleotide sequence ID" value="NC_006510.1"/>
</dbReference>
<dbReference type="SMR" id="Q5KWV9"/>
<dbReference type="STRING" id="235909.GK2542"/>
<dbReference type="KEGG" id="gka:GK2542"/>
<dbReference type="PATRIC" id="fig|235909.7.peg.2721"/>
<dbReference type="eggNOG" id="COG0775">
    <property type="taxonomic scope" value="Bacteria"/>
</dbReference>
<dbReference type="HOGENOM" id="CLU_031248_2_2_9"/>
<dbReference type="UniPathway" id="UPA00904">
    <property type="reaction ID" value="UER00871"/>
</dbReference>
<dbReference type="Proteomes" id="UP000001172">
    <property type="component" value="Chromosome"/>
</dbReference>
<dbReference type="GO" id="GO:0005829">
    <property type="term" value="C:cytosol"/>
    <property type="evidence" value="ECO:0007669"/>
    <property type="project" value="TreeGrafter"/>
</dbReference>
<dbReference type="GO" id="GO:0008782">
    <property type="term" value="F:adenosylhomocysteine nucleosidase activity"/>
    <property type="evidence" value="ECO:0007669"/>
    <property type="project" value="UniProtKB-UniRule"/>
</dbReference>
<dbReference type="GO" id="GO:0008930">
    <property type="term" value="F:methylthioadenosine nucleosidase activity"/>
    <property type="evidence" value="ECO:0007669"/>
    <property type="project" value="UniProtKB-UniRule"/>
</dbReference>
<dbReference type="GO" id="GO:0019509">
    <property type="term" value="P:L-methionine salvage from methylthioadenosine"/>
    <property type="evidence" value="ECO:0007669"/>
    <property type="project" value="UniProtKB-UniRule"/>
</dbReference>
<dbReference type="GO" id="GO:0019284">
    <property type="term" value="P:L-methionine salvage from S-adenosylmethionine"/>
    <property type="evidence" value="ECO:0007669"/>
    <property type="project" value="TreeGrafter"/>
</dbReference>
<dbReference type="GO" id="GO:0009164">
    <property type="term" value="P:nucleoside catabolic process"/>
    <property type="evidence" value="ECO:0007669"/>
    <property type="project" value="InterPro"/>
</dbReference>
<dbReference type="CDD" id="cd09008">
    <property type="entry name" value="MTAN"/>
    <property type="match status" value="1"/>
</dbReference>
<dbReference type="FunFam" id="3.40.50.1580:FF:000001">
    <property type="entry name" value="MTA/SAH nucleosidase family protein"/>
    <property type="match status" value="1"/>
</dbReference>
<dbReference type="Gene3D" id="3.40.50.1580">
    <property type="entry name" value="Nucleoside phosphorylase domain"/>
    <property type="match status" value="1"/>
</dbReference>
<dbReference type="HAMAP" id="MF_01684">
    <property type="entry name" value="Salvage_MtnN"/>
    <property type="match status" value="1"/>
</dbReference>
<dbReference type="InterPro" id="IPR010049">
    <property type="entry name" value="MTA_SAH_Nsdase"/>
</dbReference>
<dbReference type="InterPro" id="IPR000845">
    <property type="entry name" value="Nucleoside_phosphorylase_d"/>
</dbReference>
<dbReference type="InterPro" id="IPR035994">
    <property type="entry name" value="Nucleoside_phosphorylase_sf"/>
</dbReference>
<dbReference type="NCBIfam" id="TIGR01704">
    <property type="entry name" value="MTA_SAH-Nsdase"/>
    <property type="match status" value="1"/>
</dbReference>
<dbReference type="NCBIfam" id="NF004079">
    <property type="entry name" value="PRK05584.1"/>
    <property type="match status" value="1"/>
</dbReference>
<dbReference type="PANTHER" id="PTHR46832">
    <property type="entry name" value="5'-METHYLTHIOADENOSINE/S-ADENOSYLHOMOCYSTEINE NUCLEOSIDASE"/>
    <property type="match status" value="1"/>
</dbReference>
<dbReference type="PANTHER" id="PTHR46832:SF1">
    <property type="entry name" value="5'-METHYLTHIOADENOSINE_S-ADENOSYLHOMOCYSTEINE NUCLEOSIDASE"/>
    <property type="match status" value="1"/>
</dbReference>
<dbReference type="Pfam" id="PF01048">
    <property type="entry name" value="PNP_UDP_1"/>
    <property type="match status" value="1"/>
</dbReference>
<dbReference type="SUPFAM" id="SSF53167">
    <property type="entry name" value="Purine and uridine phosphorylases"/>
    <property type="match status" value="1"/>
</dbReference>